<name>RS8_SHOC1</name>
<evidence type="ECO:0000250" key="1"/>
<evidence type="ECO:0000255" key="2">
    <source>
        <dbReference type="HAMAP-Rule" id="MF_01302"/>
    </source>
</evidence>
<evidence type="ECO:0000305" key="3"/>
<accession>Q5WLP8</accession>
<comment type="function">
    <text evidence="2">One of the primary rRNA binding proteins, it binds directly to 16S rRNA central domain where it helps coordinate assembly of the platform of the 30S subunit.</text>
</comment>
<comment type="subunit">
    <text evidence="2">Part of the 30S ribosomal subunit. Contacts proteins S5 and S12.</text>
</comment>
<comment type="similarity">
    <text evidence="2">Belongs to the universal ribosomal protein uS8 family.</text>
</comment>
<protein>
    <recommendedName>
        <fullName evidence="2">Small ribosomal subunit protein uS8</fullName>
    </recommendedName>
    <alternativeName>
        <fullName evidence="3">30S ribosomal protein S8</fullName>
    </alternativeName>
</protein>
<reference key="1">
    <citation type="submission" date="2003-10" db="EMBL/GenBank/DDBJ databases">
        <title>The complete genome sequence of the alkaliphilic Bacillus clausii KSM-K16.</title>
        <authorList>
            <person name="Takaki Y."/>
            <person name="Kageyama Y."/>
            <person name="Shimamura S."/>
            <person name="Suzuki H."/>
            <person name="Nishi S."/>
            <person name="Hatada Y."/>
            <person name="Kawai S."/>
            <person name="Ito S."/>
            <person name="Horikoshi K."/>
        </authorList>
    </citation>
    <scope>NUCLEOTIDE SEQUENCE [LARGE SCALE GENOMIC DNA]</scope>
    <source>
        <strain>KSM-K16</strain>
    </source>
</reference>
<sequence length="132" mass="14882">MVMTDPIADMLTRIRNANLVRHEKLELPASMLKKEIADILKREGFIRDYEFIEDNKQGVIRIFLKYGPSNERVITGLKRISKPGLRVYAKSTELPRVLGGLGIALVSTSKGVLTDKEARQQQVGGEVLAYVW</sequence>
<proteinExistence type="inferred from homology"/>
<dbReference type="EMBL" id="AP006627">
    <property type="protein sequence ID" value="BAD62707.1"/>
    <property type="molecule type" value="Genomic_DNA"/>
</dbReference>
<dbReference type="RefSeq" id="WP_011245028.1">
    <property type="nucleotide sequence ID" value="NC_006582.1"/>
</dbReference>
<dbReference type="SMR" id="Q5WLP8"/>
<dbReference type="STRING" id="66692.ABC0164"/>
<dbReference type="KEGG" id="bcl:ABC0164"/>
<dbReference type="eggNOG" id="COG0096">
    <property type="taxonomic scope" value="Bacteria"/>
</dbReference>
<dbReference type="HOGENOM" id="CLU_098428_0_2_9"/>
<dbReference type="OrthoDB" id="9802617at2"/>
<dbReference type="Proteomes" id="UP000001168">
    <property type="component" value="Chromosome"/>
</dbReference>
<dbReference type="GO" id="GO:1990904">
    <property type="term" value="C:ribonucleoprotein complex"/>
    <property type="evidence" value="ECO:0007669"/>
    <property type="project" value="UniProtKB-KW"/>
</dbReference>
<dbReference type="GO" id="GO:0005840">
    <property type="term" value="C:ribosome"/>
    <property type="evidence" value="ECO:0007669"/>
    <property type="project" value="UniProtKB-KW"/>
</dbReference>
<dbReference type="GO" id="GO:0019843">
    <property type="term" value="F:rRNA binding"/>
    <property type="evidence" value="ECO:0007669"/>
    <property type="project" value="UniProtKB-UniRule"/>
</dbReference>
<dbReference type="GO" id="GO:0003735">
    <property type="term" value="F:structural constituent of ribosome"/>
    <property type="evidence" value="ECO:0007669"/>
    <property type="project" value="InterPro"/>
</dbReference>
<dbReference type="GO" id="GO:0006412">
    <property type="term" value="P:translation"/>
    <property type="evidence" value="ECO:0007669"/>
    <property type="project" value="UniProtKB-UniRule"/>
</dbReference>
<dbReference type="FunFam" id="3.30.1370.30:FF:000002">
    <property type="entry name" value="30S ribosomal protein S8"/>
    <property type="match status" value="1"/>
</dbReference>
<dbReference type="FunFam" id="3.30.1490.10:FF:000001">
    <property type="entry name" value="30S ribosomal protein S8"/>
    <property type="match status" value="1"/>
</dbReference>
<dbReference type="Gene3D" id="3.30.1370.30">
    <property type="match status" value="1"/>
</dbReference>
<dbReference type="Gene3D" id="3.30.1490.10">
    <property type="match status" value="1"/>
</dbReference>
<dbReference type="HAMAP" id="MF_01302_B">
    <property type="entry name" value="Ribosomal_uS8_B"/>
    <property type="match status" value="1"/>
</dbReference>
<dbReference type="InterPro" id="IPR000630">
    <property type="entry name" value="Ribosomal_uS8"/>
</dbReference>
<dbReference type="InterPro" id="IPR047863">
    <property type="entry name" value="Ribosomal_uS8_CS"/>
</dbReference>
<dbReference type="InterPro" id="IPR035987">
    <property type="entry name" value="Ribosomal_uS8_sf"/>
</dbReference>
<dbReference type="NCBIfam" id="NF001109">
    <property type="entry name" value="PRK00136.1"/>
    <property type="match status" value="1"/>
</dbReference>
<dbReference type="PANTHER" id="PTHR11758">
    <property type="entry name" value="40S RIBOSOMAL PROTEIN S15A"/>
    <property type="match status" value="1"/>
</dbReference>
<dbReference type="Pfam" id="PF00410">
    <property type="entry name" value="Ribosomal_S8"/>
    <property type="match status" value="1"/>
</dbReference>
<dbReference type="SUPFAM" id="SSF56047">
    <property type="entry name" value="Ribosomal protein S8"/>
    <property type="match status" value="1"/>
</dbReference>
<dbReference type="PROSITE" id="PS00053">
    <property type="entry name" value="RIBOSOMAL_S8"/>
    <property type="match status" value="1"/>
</dbReference>
<gene>
    <name evidence="2" type="primary">rpsH</name>
    <name type="ordered locus">ABC0164</name>
</gene>
<organism>
    <name type="scientific">Shouchella clausii (strain KSM-K16)</name>
    <name type="common">Alkalihalobacillus clausii</name>
    <dbReference type="NCBI Taxonomy" id="66692"/>
    <lineage>
        <taxon>Bacteria</taxon>
        <taxon>Bacillati</taxon>
        <taxon>Bacillota</taxon>
        <taxon>Bacilli</taxon>
        <taxon>Bacillales</taxon>
        <taxon>Bacillaceae</taxon>
        <taxon>Shouchella</taxon>
    </lineage>
</organism>
<feature type="initiator methionine" description="Removed" evidence="1">
    <location>
        <position position="1"/>
    </location>
</feature>
<feature type="chain" id="PRO_0000126365" description="Small ribosomal subunit protein uS8">
    <location>
        <begin position="2"/>
        <end position="132"/>
    </location>
</feature>
<keyword id="KW-1185">Reference proteome</keyword>
<keyword id="KW-0687">Ribonucleoprotein</keyword>
<keyword id="KW-0689">Ribosomal protein</keyword>
<keyword id="KW-0694">RNA-binding</keyword>
<keyword id="KW-0699">rRNA-binding</keyword>